<organism>
    <name type="scientific">Pseudomonas syringae pv. tomato (strain ATCC BAA-871 / DC3000)</name>
    <dbReference type="NCBI Taxonomy" id="223283"/>
    <lineage>
        <taxon>Bacteria</taxon>
        <taxon>Pseudomonadati</taxon>
        <taxon>Pseudomonadota</taxon>
        <taxon>Gammaproteobacteria</taxon>
        <taxon>Pseudomonadales</taxon>
        <taxon>Pseudomonadaceae</taxon>
        <taxon>Pseudomonas</taxon>
    </lineage>
</organism>
<sequence>MPIQNSPYKAFATLLNSGGHKVSPAELHGLLLGRSCAGAGFDNEGWFADASMLLETEPQDNIRAALVGLQEMVKGELTGDDMTVVLLLPGDDEPLTERAAALGQWCQGFLAGFGLAIGDKVLGSEAKAVLEDLAAIAQVQDALEESEDGETDYMEVMEYMRVAPLLLFTEFNEPAEPQPKPSLH</sequence>
<proteinExistence type="inferred from homology"/>
<name>Y5224_PSESM</name>
<comment type="similarity">
    <text evidence="1">Belongs to the UPF0149 family.</text>
</comment>
<accession>Q87US2</accession>
<feature type="chain" id="PRO_0000207566" description="UPF0149 protein PSPTO_5224">
    <location>
        <begin position="1"/>
        <end position="184"/>
    </location>
</feature>
<dbReference type="EMBL" id="AE016853">
    <property type="protein sequence ID" value="AAO58650.1"/>
    <property type="molecule type" value="Genomic_DNA"/>
</dbReference>
<dbReference type="RefSeq" id="NP_794955.1">
    <property type="nucleotide sequence ID" value="NC_004578.1"/>
</dbReference>
<dbReference type="RefSeq" id="WP_005621372.1">
    <property type="nucleotide sequence ID" value="NC_004578.1"/>
</dbReference>
<dbReference type="SMR" id="Q87US2"/>
<dbReference type="STRING" id="223283.PSPTO_5224"/>
<dbReference type="KEGG" id="pst:PSPTO_5224"/>
<dbReference type="PATRIC" id="fig|223283.9.peg.5346"/>
<dbReference type="eggNOG" id="COG3079">
    <property type="taxonomic scope" value="Bacteria"/>
</dbReference>
<dbReference type="HOGENOM" id="CLU_085336_0_1_6"/>
<dbReference type="OrthoDB" id="9783391at2"/>
<dbReference type="PhylomeDB" id="Q87US2"/>
<dbReference type="Proteomes" id="UP000002515">
    <property type="component" value="Chromosome"/>
</dbReference>
<dbReference type="GO" id="GO:0005829">
    <property type="term" value="C:cytosol"/>
    <property type="evidence" value="ECO:0007669"/>
    <property type="project" value="TreeGrafter"/>
</dbReference>
<dbReference type="Gene3D" id="1.20.120.740">
    <property type="entry name" value="YgfB uncharacterised protein family UPF0149, PF03695"/>
    <property type="match status" value="1"/>
</dbReference>
<dbReference type="HAMAP" id="MF_00346">
    <property type="entry name" value="UPF0149"/>
    <property type="match status" value="1"/>
</dbReference>
<dbReference type="InterPro" id="IPR011978">
    <property type="entry name" value="YgfB-like"/>
</dbReference>
<dbReference type="InterPro" id="IPR036255">
    <property type="entry name" value="YgfB-like_sf"/>
</dbReference>
<dbReference type="NCBIfam" id="NF002562">
    <property type="entry name" value="PRK02166.1"/>
    <property type="match status" value="1"/>
</dbReference>
<dbReference type="PANTHER" id="PTHR37528">
    <property type="entry name" value="UPF0149 PROTEIN YGFB"/>
    <property type="match status" value="1"/>
</dbReference>
<dbReference type="PANTHER" id="PTHR37528:SF1">
    <property type="entry name" value="UPF0149 PROTEIN YGFB"/>
    <property type="match status" value="1"/>
</dbReference>
<dbReference type="Pfam" id="PF03695">
    <property type="entry name" value="UPF0149"/>
    <property type="match status" value="1"/>
</dbReference>
<dbReference type="SUPFAM" id="SSF101327">
    <property type="entry name" value="YgfB-like"/>
    <property type="match status" value="1"/>
</dbReference>
<keyword id="KW-1185">Reference proteome</keyword>
<gene>
    <name type="ordered locus">PSPTO_5224</name>
</gene>
<protein>
    <recommendedName>
        <fullName evidence="1">UPF0149 protein PSPTO_5224</fullName>
    </recommendedName>
</protein>
<evidence type="ECO:0000255" key="1">
    <source>
        <dbReference type="HAMAP-Rule" id="MF_00346"/>
    </source>
</evidence>
<reference key="1">
    <citation type="journal article" date="2003" name="Proc. Natl. Acad. Sci. U.S.A.">
        <title>The complete genome sequence of the Arabidopsis and tomato pathogen Pseudomonas syringae pv. tomato DC3000.</title>
        <authorList>
            <person name="Buell C.R."/>
            <person name="Joardar V."/>
            <person name="Lindeberg M."/>
            <person name="Selengut J."/>
            <person name="Paulsen I.T."/>
            <person name="Gwinn M.L."/>
            <person name="Dodson R.J."/>
            <person name="DeBoy R.T."/>
            <person name="Durkin A.S."/>
            <person name="Kolonay J.F."/>
            <person name="Madupu R."/>
            <person name="Daugherty S.C."/>
            <person name="Brinkac L.M."/>
            <person name="Beanan M.J."/>
            <person name="Haft D.H."/>
            <person name="Nelson W.C."/>
            <person name="Davidsen T.M."/>
            <person name="Zafar N."/>
            <person name="Zhou L."/>
            <person name="Liu J."/>
            <person name="Yuan Q."/>
            <person name="Khouri H.M."/>
            <person name="Fedorova N.B."/>
            <person name="Tran B."/>
            <person name="Russell D."/>
            <person name="Berry K.J."/>
            <person name="Utterback T.R."/>
            <person name="Van Aken S.E."/>
            <person name="Feldblyum T.V."/>
            <person name="D'Ascenzo M."/>
            <person name="Deng W.-L."/>
            <person name="Ramos A.R."/>
            <person name="Alfano J.R."/>
            <person name="Cartinhour S."/>
            <person name="Chatterjee A.K."/>
            <person name="Delaney T.P."/>
            <person name="Lazarowitz S.G."/>
            <person name="Martin G.B."/>
            <person name="Schneider D.J."/>
            <person name="Tang X."/>
            <person name="Bender C.L."/>
            <person name="White O."/>
            <person name="Fraser C.M."/>
            <person name="Collmer A."/>
        </authorList>
    </citation>
    <scope>NUCLEOTIDE SEQUENCE [LARGE SCALE GENOMIC DNA]</scope>
    <source>
        <strain>ATCC BAA-871 / DC3000</strain>
    </source>
</reference>